<protein>
    <recommendedName>
        <fullName evidence="1">Large ribosomal subunit protein bL12</fullName>
    </recommendedName>
    <alternativeName>
        <fullName evidence="2">50S ribosomal protein L7/L12</fullName>
    </alternativeName>
</protein>
<sequence length="121" mass="12651">MALNIEEIIASVKEATVLELNDLVKAIEEEFGVTAAAPVAVAAAGGAAAEEKTDFDLVLAGAGDQKIKVIKVVREITGLGLKEAKELVDNTPKPLKEGIAKEEAEELKAKLEEVGASVEVK</sequence>
<comment type="function">
    <text evidence="1">Forms part of the ribosomal stalk which helps the ribosome interact with GTP-bound translation factors. Is thus essential for accurate translation.</text>
</comment>
<comment type="subunit">
    <text evidence="1">Homodimer. Part of the ribosomal stalk of the 50S ribosomal subunit. Forms a multimeric L10(L12)X complex, where L10 forms an elongated spine to which 2 to 4 L12 dimers bind in a sequential fashion. Binds GTP-bound translation factors.</text>
</comment>
<comment type="similarity">
    <text evidence="1">Belongs to the bacterial ribosomal protein bL12 family.</text>
</comment>
<dbReference type="EMBL" id="CP000813">
    <property type="protein sequence ID" value="ABV60790.1"/>
    <property type="molecule type" value="Genomic_DNA"/>
</dbReference>
<dbReference type="RefSeq" id="WP_003216952.1">
    <property type="nucleotide sequence ID" value="NZ_VEIS01000020.1"/>
</dbReference>
<dbReference type="SMR" id="A8F973"/>
<dbReference type="STRING" id="315750.BPUM_0090"/>
<dbReference type="GeneID" id="5619333"/>
<dbReference type="KEGG" id="bpu:BPUM_0090"/>
<dbReference type="eggNOG" id="COG0222">
    <property type="taxonomic scope" value="Bacteria"/>
</dbReference>
<dbReference type="HOGENOM" id="CLU_086499_3_2_9"/>
<dbReference type="OrthoDB" id="9811748at2"/>
<dbReference type="Proteomes" id="UP000001355">
    <property type="component" value="Chromosome"/>
</dbReference>
<dbReference type="GO" id="GO:0022625">
    <property type="term" value="C:cytosolic large ribosomal subunit"/>
    <property type="evidence" value="ECO:0007669"/>
    <property type="project" value="TreeGrafter"/>
</dbReference>
<dbReference type="GO" id="GO:0003729">
    <property type="term" value="F:mRNA binding"/>
    <property type="evidence" value="ECO:0007669"/>
    <property type="project" value="TreeGrafter"/>
</dbReference>
<dbReference type="GO" id="GO:0003735">
    <property type="term" value="F:structural constituent of ribosome"/>
    <property type="evidence" value="ECO:0007669"/>
    <property type="project" value="InterPro"/>
</dbReference>
<dbReference type="GO" id="GO:0006412">
    <property type="term" value="P:translation"/>
    <property type="evidence" value="ECO:0007669"/>
    <property type="project" value="UniProtKB-UniRule"/>
</dbReference>
<dbReference type="CDD" id="cd00387">
    <property type="entry name" value="Ribosomal_L7_L12"/>
    <property type="match status" value="1"/>
</dbReference>
<dbReference type="FunFam" id="1.20.5.710:FF:000002">
    <property type="entry name" value="50S ribosomal protein L7/L12"/>
    <property type="match status" value="1"/>
</dbReference>
<dbReference type="FunFam" id="3.30.1390.10:FF:000001">
    <property type="entry name" value="50S ribosomal protein L7/L12"/>
    <property type="match status" value="1"/>
</dbReference>
<dbReference type="Gene3D" id="3.30.1390.10">
    <property type="match status" value="1"/>
</dbReference>
<dbReference type="Gene3D" id="1.20.5.710">
    <property type="entry name" value="Single helix bin"/>
    <property type="match status" value="1"/>
</dbReference>
<dbReference type="HAMAP" id="MF_00368">
    <property type="entry name" value="Ribosomal_bL12"/>
    <property type="match status" value="1"/>
</dbReference>
<dbReference type="InterPro" id="IPR000206">
    <property type="entry name" value="Ribosomal_bL12"/>
</dbReference>
<dbReference type="InterPro" id="IPR013823">
    <property type="entry name" value="Ribosomal_bL12_C"/>
</dbReference>
<dbReference type="InterPro" id="IPR014719">
    <property type="entry name" value="Ribosomal_bL12_C/ClpS-like"/>
</dbReference>
<dbReference type="InterPro" id="IPR008932">
    <property type="entry name" value="Ribosomal_bL12_oligo"/>
</dbReference>
<dbReference type="InterPro" id="IPR036235">
    <property type="entry name" value="Ribosomal_bL12_oligo_N_sf"/>
</dbReference>
<dbReference type="NCBIfam" id="TIGR00855">
    <property type="entry name" value="L12"/>
    <property type="match status" value="1"/>
</dbReference>
<dbReference type="PANTHER" id="PTHR45987">
    <property type="entry name" value="39S RIBOSOMAL PROTEIN L12"/>
    <property type="match status" value="1"/>
</dbReference>
<dbReference type="PANTHER" id="PTHR45987:SF4">
    <property type="entry name" value="LARGE RIBOSOMAL SUBUNIT PROTEIN BL12M"/>
    <property type="match status" value="1"/>
</dbReference>
<dbReference type="Pfam" id="PF00542">
    <property type="entry name" value="Ribosomal_L12"/>
    <property type="match status" value="1"/>
</dbReference>
<dbReference type="Pfam" id="PF16320">
    <property type="entry name" value="Ribosomal_L12_N"/>
    <property type="match status" value="1"/>
</dbReference>
<dbReference type="SUPFAM" id="SSF54736">
    <property type="entry name" value="ClpS-like"/>
    <property type="match status" value="1"/>
</dbReference>
<dbReference type="SUPFAM" id="SSF48300">
    <property type="entry name" value="Ribosomal protein L7/12, oligomerisation (N-terminal) domain"/>
    <property type="match status" value="1"/>
</dbReference>
<accession>A8F973</accession>
<name>RL7_BACP2</name>
<feature type="chain" id="PRO_1000059922" description="Large ribosomal subunit protein bL12">
    <location>
        <begin position="1"/>
        <end position="121"/>
    </location>
</feature>
<keyword id="KW-0687">Ribonucleoprotein</keyword>
<keyword id="KW-0689">Ribosomal protein</keyword>
<organism>
    <name type="scientific">Bacillus pumilus (strain SAFR-032)</name>
    <dbReference type="NCBI Taxonomy" id="315750"/>
    <lineage>
        <taxon>Bacteria</taxon>
        <taxon>Bacillati</taxon>
        <taxon>Bacillota</taxon>
        <taxon>Bacilli</taxon>
        <taxon>Bacillales</taxon>
        <taxon>Bacillaceae</taxon>
        <taxon>Bacillus</taxon>
    </lineage>
</organism>
<evidence type="ECO:0000255" key="1">
    <source>
        <dbReference type="HAMAP-Rule" id="MF_00368"/>
    </source>
</evidence>
<evidence type="ECO:0000305" key="2"/>
<gene>
    <name evidence="1" type="primary">rplL</name>
    <name type="ordered locus">BPUM_0090</name>
</gene>
<reference key="1">
    <citation type="journal article" date="2007" name="PLoS ONE">
        <title>Paradoxical DNA repair and peroxide resistance gene conservation in Bacillus pumilus SAFR-032.</title>
        <authorList>
            <person name="Gioia J."/>
            <person name="Yerrapragada S."/>
            <person name="Qin X."/>
            <person name="Jiang H."/>
            <person name="Igboeli O.C."/>
            <person name="Muzny D."/>
            <person name="Dugan-Rocha S."/>
            <person name="Ding Y."/>
            <person name="Hawes A."/>
            <person name="Liu W."/>
            <person name="Perez L."/>
            <person name="Kovar C."/>
            <person name="Dinh H."/>
            <person name="Lee S."/>
            <person name="Nazareth L."/>
            <person name="Blyth P."/>
            <person name="Holder M."/>
            <person name="Buhay C."/>
            <person name="Tirumalai M.R."/>
            <person name="Liu Y."/>
            <person name="Dasgupta I."/>
            <person name="Bokhetache L."/>
            <person name="Fujita M."/>
            <person name="Karouia F."/>
            <person name="Eswara Moorthy P."/>
            <person name="Siefert J."/>
            <person name="Uzman A."/>
            <person name="Buzumbo P."/>
            <person name="Verma A."/>
            <person name="Zwiya H."/>
            <person name="McWilliams B.D."/>
            <person name="Olowu A."/>
            <person name="Clinkenbeard K.D."/>
            <person name="Newcombe D."/>
            <person name="Golebiewski L."/>
            <person name="Petrosino J.F."/>
            <person name="Nicholson W.L."/>
            <person name="Fox G.E."/>
            <person name="Venkateswaran K."/>
            <person name="Highlander S.K."/>
            <person name="Weinstock G.M."/>
        </authorList>
    </citation>
    <scope>NUCLEOTIDE SEQUENCE [LARGE SCALE GENOMIC DNA]</scope>
    <source>
        <strain>SAFR-032</strain>
    </source>
</reference>
<proteinExistence type="inferred from homology"/>